<protein>
    <recommendedName>
        <fullName evidence="1">Glucosamine-6-phosphate deaminase</fullName>
        <ecNumber evidence="1">3.5.99.6</ecNumber>
    </recommendedName>
    <alternativeName>
        <fullName evidence="1">GlcN6P deaminase</fullName>
        <shortName evidence="1">GNPDA</shortName>
    </alternativeName>
    <alternativeName>
        <fullName evidence="1">Glucosamine-6-phosphate isomerase</fullName>
    </alternativeName>
</protein>
<evidence type="ECO:0000255" key="1">
    <source>
        <dbReference type="HAMAP-Rule" id="MF_01241"/>
    </source>
</evidence>
<gene>
    <name evidence="1" type="primary">nagB</name>
    <name type="ordered locus">Arth_2590</name>
</gene>
<name>NAGB_ARTS2</name>
<accession>A0JY49</accession>
<keyword id="KW-0119">Carbohydrate metabolism</keyword>
<keyword id="KW-0378">Hydrolase</keyword>
<keyword id="KW-1185">Reference proteome</keyword>
<reference key="1">
    <citation type="journal article" date="2013" name="Stand. Genomic Sci.">
        <title>Complete genome sequence of Arthrobacter sp. strain FB24.</title>
        <authorList>
            <person name="Nakatsu C.H."/>
            <person name="Barabote R."/>
            <person name="Thompson S."/>
            <person name="Bruce D."/>
            <person name="Detter C."/>
            <person name="Brettin T."/>
            <person name="Han C."/>
            <person name="Beasley F."/>
            <person name="Chen W."/>
            <person name="Konopka A."/>
            <person name="Xie G."/>
        </authorList>
    </citation>
    <scope>NUCLEOTIDE SEQUENCE [LARGE SCALE GENOMIC DNA]</scope>
    <source>
        <strain>FB24</strain>
    </source>
</reference>
<sequence>MEVVILPGSKQIGALAADAIEALLRRKPDAVLGLATGSSPLPVYDELARRHGQAGLDFSRVQAFALDEYVGLEPGHPQSYREVIRREFTDRVNIAPGNVHHPDGSAADIPAACQAYEDAIKAAGGVDLQLLGIGTDGHIGFNEPGSSLASRTRIKSLIEQTRRDNARFFTNIHDVPHHVLTQGLGTIMDARHVILIATGAQKAQAVRDFVEGPVAAICAASVLQMHPHVTVLVDEAAASSLRLADYYRHTYDSKPAWQGL</sequence>
<dbReference type="EC" id="3.5.99.6" evidence="1"/>
<dbReference type="EMBL" id="CP000454">
    <property type="protein sequence ID" value="ABK03969.1"/>
    <property type="molecule type" value="Genomic_DNA"/>
</dbReference>
<dbReference type="RefSeq" id="WP_011692431.1">
    <property type="nucleotide sequence ID" value="NC_008541.1"/>
</dbReference>
<dbReference type="SMR" id="A0JY49"/>
<dbReference type="STRING" id="290399.Arth_2590"/>
<dbReference type="KEGG" id="art:Arth_2590"/>
<dbReference type="eggNOG" id="COG0363">
    <property type="taxonomic scope" value="Bacteria"/>
</dbReference>
<dbReference type="HOGENOM" id="CLU_049611_1_1_11"/>
<dbReference type="OrthoDB" id="9791139at2"/>
<dbReference type="UniPathway" id="UPA00629">
    <property type="reaction ID" value="UER00684"/>
</dbReference>
<dbReference type="Proteomes" id="UP000000754">
    <property type="component" value="Chromosome"/>
</dbReference>
<dbReference type="GO" id="GO:0005737">
    <property type="term" value="C:cytoplasm"/>
    <property type="evidence" value="ECO:0007669"/>
    <property type="project" value="TreeGrafter"/>
</dbReference>
<dbReference type="GO" id="GO:0004342">
    <property type="term" value="F:glucosamine-6-phosphate deaminase activity"/>
    <property type="evidence" value="ECO:0007669"/>
    <property type="project" value="UniProtKB-UniRule"/>
</dbReference>
<dbReference type="GO" id="GO:0042802">
    <property type="term" value="F:identical protein binding"/>
    <property type="evidence" value="ECO:0007669"/>
    <property type="project" value="TreeGrafter"/>
</dbReference>
<dbReference type="GO" id="GO:0005975">
    <property type="term" value="P:carbohydrate metabolic process"/>
    <property type="evidence" value="ECO:0007669"/>
    <property type="project" value="InterPro"/>
</dbReference>
<dbReference type="GO" id="GO:0006043">
    <property type="term" value="P:glucosamine catabolic process"/>
    <property type="evidence" value="ECO:0007669"/>
    <property type="project" value="TreeGrafter"/>
</dbReference>
<dbReference type="GO" id="GO:0006046">
    <property type="term" value="P:N-acetylglucosamine catabolic process"/>
    <property type="evidence" value="ECO:0007669"/>
    <property type="project" value="TreeGrafter"/>
</dbReference>
<dbReference type="GO" id="GO:0019262">
    <property type="term" value="P:N-acetylneuraminate catabolic process"/>
    <property type="evidence" value="ECO:0007669"/>
    <property type="project" value="UniProtKB-UniRule"/>
</dbReference>
<dbReference type="CDD" id="cd01399">
    <property type="entry name" value="GlcN6P_deaminase"/>
    <property type="match status" value="1"/>
</dbReference>
<dbReference type="FunFam" id="3.40.50.1360:FF:000003">
    <property type="entry name" value="Glucosamine-6-phosphate deaminase"/>
    <property type="match status" value="1"/>
</dbReference>
<dbReference type="Gene3D" id="3.40.50.1360">
    <property type="match status" value="1"/>
</dbReference>
<dbReference type="HAMAP" id="MF_01241">
    <property type="entry name" value="GlcN6P_deamin"/>
    <property type="match status" value="1"/>
</dbReference>
<dbReference type="InterPro" id="IPR006148">
    <property type="entry name" value="Glc/Gal-6P_isomerase"/>
</dbReference>
<dbReference type="InterPro" id="IPR004547">
    <property type="entry name" value="Glucosamine6P_isomerase"/>
</dbReference>
<dbReference type="InterPro" id="IPR018321">
    <property type="entry name" value="Glucosamine6P_isomerase_CS"/>
</dbReference>
<dbReference type="InterPro" id="IPR037171">
    <property type="entry name" value="NagB/RpiA_transferase-like"/>
</dbReference>
<dbReference type="NCBIfam" id="TIGR00502">
    <property type="entry name" value="nagB"/>
    <property type="match status" value="1"/>
</dbReference>
<dbReference type="NCBIfam" id="NF001684">
    <property type="entry name" value="PRK00443.1-4"/>
    <property type="match status" value="1"/>
</dbReference>
<dbReference type="PANTHER" id="PTHR11280">
    <property type="entry name" value="GLUCOSAMINE-6-PHOSPHATE ISOMERASE"/>
    <property type="match status" value="1"/>
</dbReference>
<dbReference type="PANTHER" id="PTHR11280:SF5">
    <property type="entry name" value="GLUCOSAMINE-6-PHOSPHATE ISOMERASE"/>
    <property type="match status" value="1"/>
</dbReference>
<dbReference type="Pfam" id="PF01182">
    <property type="entry name" value="Glucosamine_iso"/>
    <property type="match status" value="1"/>
</dbReference>
<dbReference type="SUPFAM" id="SSF100950">
    <property type="entry name" value="NagB/RpiA/CoA transferase-like"/>
    <property type="match status" value="1"/>
</dbReference>
<dbReference type="PROSITE" id="PS01161">
    <property type="entry name" value="GLC_GALNAC_ISOMERASE"/>
    <property type="match status" value="1"/>
</dbReference>
<proteinExistence type="inferred from homology"/>
<feature type="chain" id="PRO_1000066952" description="Glucosamine-6-phosphate deaminase">
    <location>
        <begin position="1"/>
        <end position="260"/>
    </location>
</feature>
<feature type="active site" description="Proton acceptor; for enolization step" evidence="1">
    <location>
        <position position="67"/>
    </location>
</feature>
<feature type="active site" description="For ring-opening step" evidence="1">
    <location>
        <position position="136"/>
    </location>
</feature>
<feature type="active site" description="Proton acceptor; for ring-opening step" evidence="1">
    <location>
        <position position="138"/>
    </location>
</feature>
<feature type="active site" description="For ring-opening step" evidence="1">
    <location>
        <position position="143"/>
    </location>
</feature>
<comment type="function">
    <text evidence="1">Catalyzes the reversible isomerization-deamination of glucosamine 6-phosphate (GlcN6P) to form fructose 6-phosphate (Fru6P) and ammonium ion.</text>
</comment>
<comment type="catalytic activity">
    <reaction evidence="1">
        <text>alpha-D-glucosamine 6-phosphate + H2O = beta-D-fructose 6-phosphate + NH4(+)</text>
        <dbReference type="Rhea" id="RHEA:12172"/>
        <dbReference type="ChEBI" id="CHEBI:15377"/>
        <dbReference type="ChEBI" id="CHEBI:28938"/>
        <dbReference type="ChEBI" id="CHEBI:57634"/>
        <dbReference type="ChEBI" id="CHEBI:75989"/>
        <dbReference type="EC" id="3.5.99.6"/>
    </reaction>
</comment>
<comment type="pathway">
    <text evidence="1">Amino-sugar metabolism; N-acetylneuraminate degradation; D-fructose 6-phosphate from N-acetylneuraminate: step 5/5.</text>
</comment>
<comment type="similarity">
    <text evidence="1">Belongs to the glucosamine/galactosamine-6-phosphate isomerase family. NagB subfamily.</text>
</comment>
<organism>
    <name type="scientific">Arthrobacter sp. (strain FB24)</name>
    <dbReference type="NCBI Taxonomy" id="290399"/>
    <lineage>
        <taxon>Bacteria</taxon>
        <taxon>Bacillati</taxon>
        <taxon>Actinomycetota</taxon>
        <taxon>Actinomycetes</taxon>
        <taxon>Micrococcales</taxon>
        <taxon>Micrococcaceae</taxon>
        <taxon>Arthrobacter</taxon>
    </lineage>
</organism>